<accession>Q7ZW98</accession>
<proteinExistence type="evidence at transcript level"/>
<comment type="function">
    <text evidence="1">Component of the adaptor complexes which link clathrin to receptors in coated vesicles. Clathrin-associated protein complexes are believed to interact with the cytoplasmic tails of membrane proteins, leading to their selection and concentration. AP50 is a subunit of the plasma membrane adaptor. The complex binds polyphosphoinositide-containing lipids (By similarity).</text>
</comment>
<comment type="subunit">
    <text evidence="1">Adaptor protein complex 2 (AP-2) is a heterotetramer composed of two large adaptins (alpha-type subunit and beta-type subunit), a medium adaptin (mu-type subunit) and a small adaptin (sigma-type subunit).</text>
</comment>
<comment type="subcellular location">
    <subcellularLocation>
        <location>Cell membrane</location>
    </subcellularLocation>
    <subcellularLocation>
        <location>Membrane</location>
        <location>Coated pit</location>
        <topology>Peripheral membrane protein</topology>
        <orientation>Cytoplasmic side</orientation>
    </subcellularLocation>
    <text evidence="1">Component of the coat surrounding the cytoplasmic face of coated vesicles in the plasma membrane.</text>
</comment>
<comment type="similarity">
    <text evidence="4">Belongs to the adaptor complexes medium subunit family.</text>
</comment>
<sequence length="436" mass="49743">MIGGLFIYNHKGEVLISRVYRDDIGRNAVDAFRVNVIHARQQVRSPVTNIARTSFFHVKRSNIWLAAVTKQNVNAAMVFEFLYKMCDVMTAYFGKISEENIKNNFVLIYELLDEILDFGYPQNSETGALKTFITQQGIKSQHLTKEEQSQITSQVTGQIGWRREGIKYRRNELFLDVLESVNLLMSPQGQVLSAHVSGRVVMKSYLSGMPECKFGMNDKIVIDKQGKGGTTDDTGKSGKQSIAIDDCTFHQCVRLSKFDSERSISFIPPDGEYELMRYRTTKDIILPFRVIPLVREVGRTKLEVKVVIKSNFKPSLLAQKIEVRIPTPLNTSGVQVICMKGKAKYKASENAIVWKIKRMVGMKESQISAEIELLPTNDKKKWARPPISMNFEVPFAPSGLKVRYLKVFEPKLNYSDHDVIKWVRYIGRSGIYETRC</sequence>
<gene>
    <name type="primary">ap2m1b</name>
    <name type="synonym">ap2m1</name>
    <name type="ORF">zgc:56643</name>
</gene>
<protein>
    <recommendedName>
        <fullName>AP-2 complex subunit mu-B</fullName>
    </recommendedName>
    <alternativeName>
        <fullName>AP-2 mu-B chain</fullName>
    </alternativeName>
    <alternativeName>
        <fullName>Clathrin assembly protein complex 2 mu-B medium chain</fullName>
    </alternativeName>
    <alternativeName>
        <fullName>Clathrin coat assembly protein AP50-B</fullName>
    </alternativeName>
    <alternativeName>
        <fullName>Clathrin coat-associated protein AP50-B</fullName>
    </alternativeName>
    <alternativeName>
        <fullName>Mu2-adaptin-B</fullName>
    </alternativeName>
    <alternativeName>
        <fullName>Plasma membrane adaptor AP-2 50 kDa protein B</fullName>
    </alternativeName>
</protein>
<reference key="1">
    <citation type="submission" date="2003-03" db="EMBL/GenBank/DDBJ databases">
        <authorList>
            <consortium name="NIH - Zebrafish Gene Collection (ZGC) project"/>
        </authorList>
    </citation>
    <scope>NUCLEOTIDE SEQUENCE [LARGE SCALE MRNA]</scope>
</reference>
<feature type="chain" id="PRO_0000318894" description="AP-2 complex subunit mu-B">
    <location>
        <begin position="1"/>
        <end position="436"/>
    </location>
</feature>
<feature type="domain" description="MHD" evidence="3">
    <location>
        <begin position="170"/>
        <end position="435"/>
    </location>
</feature>
<feature type="binding site" evidence="2">
    <location>
        <position position="342"/>
    </location>
    <ligand>
        <name>a 1,2-diacyl-sn-glycero-3-phospho-(1D-myo-inositol-3,4,5-trisphosphate)</name>
        <dbReference type="ChEBI" id="CHEBI:57836"/>
    </ligand>
</feature>
<feature type="binding site" evidence="2">
    <location>
        <position position="346"/>
    </location>
    <ligand>
        <name>a 1,2-diacyl-sn-glycero-3-phospho-(1D-myo-inositol-3,4,5-trisphosphate)</name>
        <dbReference type="ChEBI" id="CHEBI:57836"/>
    </ligand>
</feature>
<feature type="binding site" evidence="2">
    <location>
        <position position="355"/>
    </location>
    <ligand>
        <name>a 1,2-diacyl-sn-glycero-3-phospho-(1D-myo-inositol-3,4,5-trisphosphate)</name>
        <dbReference type="ChEBI" id="CHEBI:57836"/>
    </ligand>
</feature>
<name>AP2MB_DANRE</name>
<dbReference type="EMBL" id="BC049515">
    <property type="protein sequence ID" value="AAH49515.1"/>
    <property type="molecule type" value="mRNA"/>
</dbReference>
<dbReference type="RefSeq" id="NP_957320.1">
    <property type="nucleotide sequence ID" value="NM_201026.2"/>
</dbReference>
<dbReference type="SMR" id="Q7ZW98"/>
<dbReference type="FunCoup" id="Q7ZW98">
    <property type="interactions" value="2621"/>
</dbReference>
<dbReference type="STRING" id="7955.ENSDARP00000126276"/>
<dbReference type="PaxDb" id="7955-ENSDARP00000106819"/>
<dbReference type="GeneID" id="394001"/>
<dbReference type="KEGG" id="dre:394001"/>
<dbReference type="AGR" id="ZFIN:ZDB-GENE-040426-1103"/>
<dbReference type="CTD" id="394001"/>
<dbReference type="ZFIN" id="ZDB-GENE-040426-1103">
    <property type="gene designation" value="ap2m1b"/>
</dbReference>
<dbReference type="eggNOG" id="KOG0938">
    <property type="taxonomic scope" value="Eukaryota"/>
</dbReference>
<dbReference type="InParanoid" id="Q7ZW98"/>
<dbReference type="OrthoDB" id="10259133at2759"/>
<dbReference type="PhylomeDB" id="Q7ZW98"/>
<dbReference type="Reactome" id="R-DRE-8856825">
    <property type="pathway name" value="Cargo recognition for clathrin-mediated endocytosis"/>
</dbReference>
<dbReference type="PRO" id="PR:Q7ZW98"/>
<dbReference type="Proteomes" id="UP000000437">
    <property type="component" value="Chromosome 18"/>
</dbReference>
<dbReference type="GO" id="GO:0030122">
    <property type="term" value="C:AP-2 adaptor complex"/>
    <property type="evidence" value="ECO:0000318"/>
    <property type="project" value="GO_Central"/>
</dbReference>
<dbReference type="GO" id="GO:0031410">
    <property type="term" value="C:cytoplasmic vesicle"/>
    <property type="evidence" value="ECO:0000318"/>
    <property type="project" value="GO_Central"/>
</dbReference>
<dbReference type="GO" id="GO:0035615">
    <property type="term" value="F:clathrin adaptor activity"/>
    <property type="evidence" value="ECO:0000318"/>
    <property type="project" value="GO_Central"/>
</dbReference>
<dbReference type="GO" id="GO:0008289">
    <property type="term" value="F:lipid binding"/>
    <property type="evidence" value="ECO:0007669"/>
    <property type="project" value="UniProtKB-KW"/>
</dbReference>
<dbReference type="GO" id="GO:0072583">
    <property type="term" value="P:clathrin-dependent endocytosis"/>
    <property type="evidence" value="ECO:0000318"/>
    <property type="project" value="GO_Central"/>
</dbReference>
<dbReference type="GO" id="GO:0006886">
    <property type="term" value="P:intracellular protein transport"/>
    <property type="evidence" value="ECO:0007669"/>
    <property type="project" value="InterPro"/>
</dbReference>
<dbReference type="GO" id="GO:0016055">
    <property type="term" value="P:Wnt signaling pathway"/>
    <property type="evidence" value="ECO:0000316"/>
    <property type="project" value="ZFIN"/>
</dbReference>
<dbReference type="CDD" id="cd09251">
    <property type="entry name" value="AP-2_Mu2_Cterm"/>
    <property type="match status" value="1"/>
</dbReference>
<dbReference type="CDD" id="cd14836">
    <property type="entry name" value="AP2_Mu_N"/>
    <property type="match status" value="1"/>
</dbReference>
<dbReference type="FunFam" id="2.60.40.1170:FF:000008">
    <property type="entry name" value="AP-2 complex subunit mu isoform 2"/>
    <property type="match status" value="1"/>
</dbReference>
<dbReference type="FunFam" id="3.30.450.60:FF:000002">
    <property type="entry name" value="AP-2 complex subunit mu, putative"/>
    <property type="match status" value="1"/>
</dbReference>
<dbReference type="Gene3D" id="3.30.450.60">
    <property type="match status" value="1"/>
</dbReference>
<dbReference type="Gene3D" id="2.60.40.1170">
    <property type="entry name" value="Mu homology domain, subdomain B"/>
    <property type="match status" value="2"/>
</dbReference>
<dbReference type="InterPro" id="IPR050431">
    <property type="entry name" value="Adaptor_comp_med_subunit"/>
</dbReference>
<dbReference type="InterPro" id="IPR036168">
    <property type="entry name" value="AP2_Mu_C_sf"/>
</dbReference>
<dbReference type="InterPro" id="IPR043532">
    <property type="entry name" value="AP2_Mu_N"/>
</dbReference>
<dbReference type="InterPro" id="IPR022775">
    <property type="entry name" value="AP_mu_sigma_su"/>
</dbReference>
<dbReference type="InterPro" id="IPR001392">
    <property type="entry name" value="Clathrin_mu"/>
</dbReference>
<dbReference type="InterPro" id="IPR018240">
    <property type="entry name" value="Clathrin_mu_CS"/>
</dbReference>
<dbReference type="InterPro" id="IPR011012">
    <property type="entry name" value="Longin-like_dom_sf"/>
</dbReference>
<dbReference type="InterPro" id="IPR028565">
    <property type="entry name" value="MHD"/>
</dbReference>
<dbReference type="InterPro" id="IPR043512">
    <property type="entry name" value="Mu2_C"/>
</dbReference>
<dbReference type="PANTHER" id="PTHR10529">
    <property type="entry name" value="AP COMPLEX SUBUNIT MU"/>
    <property type="match status" value="1"/>
</dbReference>
<dbReference type="Pfam" id="PF00928">
    <property type="entry name" value="Adap_comp_sub"/>
    <property type="match status" value="1"/>
</dbReference>
<dbReference type="Pfam" id="PF01217">
    <property type="entry name" value="Clat_adaptor_s"/>
    <property type="match status" value="1"/>
</dbReference>
<dbReference type="PIRSF" id="PIRSF005992">
    <property type="entry name" value="Clathrin_mu"/>
    <property type="match status" value="1"/>
</dbReference>
<dbReference type="PRINTS" id="PR00314">
    <property type="entry name" value="CLATHRINADPT"/>
</dbReference>
<dbReference type="SUPFAM" id="SSF49447">
    <property type="entry name" value="Second domain of Mu2 adaptin subunit (ap50) of ap2 adaptor"/>
    <property type="match status" value="1"/>
</dbReference>
<dbReference type="SUPFAM" id="SSF64356">
    <property type="entry name" value="SNARE-like"/>
    <property type="match status" value="1"/>
</dbReference>
<dbReference type="PROSITE" id="PS00990">
    <property type="entry name" value="CLAT_ADAPTOR_M_1"/>
    <property type="match status" value="1"/>
</dbReference>
<dbReference type="PROSITE" id="PS00991">
    <property type="entry name" value="CLAT_ADAPTOR_M_2"/>
    <property type="match status" value="1"/>
</dbReference>
<dbReference type="PROSITE" id="PS51072">
    <property type="entry name" value="MHD"/>
    <property type="match status" value="1"/>
</dbReference>
<organism>
    <name type="scientific">Danio rerio</name>
    <name type="common">Zebrafish</name>
    <name type="synonym">Brachydanio rerio</name>
    <dbReference type="NCBI Taxonomy" id="7955"/>
    <lineage>
        <taxon>Eukaryota</taxon>
        <taxon>Metazoa</taxon>
        <taxon>Chordata</taxon>
        <taxon>Craniata</taxon>
        <taxon>Vertebrata</taxon>
        <taxon>Euteleostomi</taxon>
        <taxon>Actinopterygii</taxon>
        <taxon>Neopterygii</taxon>
        <taxon>Teleostei</taxon>
        <taxon>Ostariophysi</taxon>
        <taxon>Cypriniformes</taxon>
        <taxon>Danionidae</taxon>
        <taxon>Danioninae</taxon>
        <taxon>Danio</taxon>
    </lineage>
</organism>
<evidence type="ECO:0000250" key="1"/>
<evidence type="ECO:0000250" key="2">
    <source>
        <dbReference type="UniProtKB" id="P84092"/>
    </source>
</evidence>
<evidence type="ECO:0000255" key="3">
    <source>
        <dbReference type="PROSITE-ProRule" id="PRU00404"/>
    </source>
</evidence>
<evidence type="ECO:0000305" key="4"/>
<keyword id="KW-1003">Cell membrane</keyword>
<keyword id="KW-0168">Coated pit</keyword>
<keyword id="KW-0254">Endocytosis</keyword>
<keyword id="KW-0446">Lipid-binding</keyword>
<keyword id="KW-0472">Membrane</keyword>
<keyword id="KW-0653">Protein transport</keyword>
<keyword id="KW-1185">Reference proteome</keyword>
<keyword id="KW-0813">Transport</keyword>